<evidence type="ECO:0000250" key="1"/>
<evidence type="ECO:0000269" key="2">
    <source>
    </source>
</evidence>
<evidence type="ECO:0000269" key="3">
    <source>
    </source>
</evidence>
<evidence type="ECO:0000269" key="4">
    <source>
    </source>
</evidence>
<evidence type="ECO:0000269" key="5">
    <source>
    </source>
</evidence>
<evidence type="ECO:0000269" key="6">
    <source>
    </source>
</evidence>
<evidence type="ECO:0000269" key="7">
    <source>
    </source>
</evidence>
<evidence type="ECO:0000305" key="8"/>
<accession>P9WNU7</accession>
<accession>A0A111</accession>
<accession>L0T8N5</accession>
<accession>P64943</accession>
<accession>Q10706</accession>
<feature type="chain" id="PRO_0000103966" description="Pup--protein ligase">
    <location>
        <begin position="1"/>
        <end position="452"/>
    </location>
</feature>
<feature type="active site" description="Proton acceptor" evidence="1">
    <location>
        <position position="57"/>
    </location>
</feature>
<feature type="binding site" evidence="1">
    <location>
        <position position="9"/>
    </location>
    <ligand>
        <name>Mg(2+)</name>
        <dbReference type="ChEBI" id="CHEBI:18420"/>
    </ligand>
</feature>
<feature type="binding site" evidence="1">
    <location>
        <position position="53"/>
    </location>
    <ligand>
        <name>ATP</name>
        <dbReference type="ChEBI" id="CHEBI:30616"/>
    </ligand>
</feature>
<feature type="binding site" evidence="1">
    <location>
        <position position="55"/>
    </location>
    <ligand>
        <name>Mg(2+)</name>
        <dbReference type="ChEBI" id="CHEBI:18420"/>
    </ligand>
</feature>
<feature type="binding site" evidence="1">
    <location>
        <position position="63"/>
    </location>
    <ligand>
        <name>Mg(2+)</name>
        <dbReference type="ChEBI" id="CHEBI:18420"/>
    </ligand>
</feature>
<feature type="binding site" evidence="1">
    <location>
        <position position="66"/>
    </location>
    <ligand>
        <name>ATP</name>
        <dbReference type="ChEBI" id="CHEBI:30616"/>
    </ligand>
</feature>
<feature type="binding site" evidence="1">
    <location>
        <position position="419"/>
    </location>
    <ligand>
        <name>ATP</name>
        <dbReference type="ChEBI" id="CHEBI:30616"/>
    </ligand>
</feature>
<feature type="mutagenesis site" description="Abolishes pupylation." evidence="7">
    <original>E</original>
    <variation>A</variation>
    <location>
        <position position="9"/>
    </location>
</feature>
<feature type="mutagenesis site" description="Abolishes pupylation." evidence="7">
    <original>E</original>
    <variation>A</variation>
    <location>
        <position position="11"/>
    </location>
</feature>
<feature type="mutagenesis site" description="Abolishes pupylation." evidence="7">
    <original>R</original>
    <variation>E</variation>
    <location>
        <position position="53"/>
    </location>
</feature>
<feature type="mutagenesis site" description="Abolishes pupylation." evidence="7">
    <original>Y</original>
    <variation>K</variation>
    <location>
        <position position="55"/>
    </location>
</feature>
<feature type="mutagenesis site" description="Abolishes pupylation." evidence="7">
    <original>D</original>
    <variation>N</variation>
    <location>
        <position position="57"/>
    </location>
</feature>
<feature type="mutagenesis site" description="Abolishes pupylation." evidence="7">
    <original>E</original>
    <variation>A</variation>
    <location>
        <position position="63"/>
    </location>
</feature>
<feature type="mutagenesis site" description="Abolishes pupylation." evidence="7">
    <original>H</original>
    <variation>A</variation>
    <location>
        <position position="123"/>
    </location>
</feature>
<feature type="mutagenesis site" description="Abolishes pupylation." evidence="7">
    <original>R</original>
    <variation>A</variation>
    <location>
        <position position="171"/>
    </location>
</feature>
<feature type="mutagenesis site" description="Abolishes pupylation." evidence="7">
    <original>R</original>
    <variation>A</variation>
    <location>
        <position position="187"/>
    </location>
</feature>
<feature type="mutagenesis site" description="Abolishes pupylation." evidence="7">
    <original>H</original>
    <variation>E</variation>
    <location>
        <position position="207"/>
    </location>
</feature>
<gene>
    <name type="primary">pafA</name>
    <name type="synonym">paf</name>
    <name type="ordered locus">Rv2097c</name>
    <name type="ORF">MTCY49.37c</name>
</gene>
<sequence length="452" mass="51384">MQRRIMGIETEFGVTCTFHGHRRLSPDEVARYLFRRVVSWGRSSNVFLRNGARLYLDVGSHPEYATAECDSLVQLVTHDRAGEWVLEDLLVDAEQRLADEGIGGDIYLFKNNTDSAGNSYGCHENYLIVRAGEFSRISDVLLPFLVTRQLICGAGKVLQTPKAATYCLSQRAEHIWEGVSSATTRSRPIINTRDEPHADAEKYRRLHVIVGDSNMSETTTMLKVGTAALVLEMIESGVAFRDFSLDNPIRAIREVSHDVTGRRPVRLAGGRQASALDIQREYYTRAVEHLQTREPNAQIEQVVDLWGRQLDAVESQDFAKVDTEIDWVIKRKLFQRYQDRYDMELSHPKIAQLDLAYHDIKRGRGIFDLLQRKGLAARVTTDEEIAEAVDQPPQTTRARLRGEFISAAQEAGRDFTVDWVHLKLNDQAQRTVLCKDPFRAVDERVKRLIASM</sequence>
<proteinExistence type="evidence at protein level"/>
<keyword id="KW-0067">ATP-binding</keyword>
<keyword id="KW-0436">Ligase</keyword>
<keyword id="KW-0460">Magnesium</keyword>
<keyword id="KW-0479">Metal-binding</keyword>
<keyword id="KW-0547">Nucleotide-binding</keyword>
<keyword id="KW-1185">Reference proteome</keyword>
<keyword id="KW-0833">Ubl conjugation pathway</keyword>
<keyword id="KW-0843">Virulence</keyword>
<dbReference type="EC" id="6.3.1.19" evidence="5 6"/>
<dbReference type="EMBL" id="DQ990836">
    <property type="protein sequence ID" value="ABJ90140.1"/>
    <property type="molecule type" value="Genomic_DNA"/>
</dbReference>
<dbReference type="EMBL" id="AL123456">
    <property type="protein sequence ID" value="CCP44872.1"/>
    <property type="molecule type" value="Genomic_DNA"/>
</dbReference>
<dbReference type="PIR" id="D70768">
    <property type="entry name" value="D70768"/>
</dbReference>
<dbReference type="RefSeq" id="NP_216613.1">
    <property type="nucleotide sequence ID" value="NC_000962.3"/>
</dbReference>
<dbReference type="RefSeq" id="WP_003410781.1">
    <property type="nucleotide sequence ID" value="NZ_NVQJ01000061.1"/>
</dbReference>
<dbReference type="SMR" id="P9WNU7"/>
<dbReference type="STRING" id="83332.Rv2097c"/>
<dbReference type="BindingDB" id="P9WNU7"/>
<dbReference type="ChEMBL" id="CHEMBL5169231"/>
<dbReference type="PaxDb" id="83332-Rv2097c"/>
<dbReference type="DNASU" id="888460"/>
<dbReference type="GeneID" id="45426074"/>
<dbReference type="GeneID" id="888460"/>
<dbReference type="KEGG" id="mtu:Rv2097c"/>
<dbReference type="KEGG" id="mtv:RVBD_2097c"/>
<dbReference type="PATRIC" id="fig|83332.111.peg.2337"/>
<dbReference type="TubercuList" id="Rv2097c"/>
<dbReference type="eggNOG" id="COG0638">
    <property type="taxonomic scope" value="Bacteria"/>
</dbReference>
<dbReference type="InParanoid" id="P9WNU7"/>
<dbReference type="OrthoDB" id="9760627at2"/>
<dbReference type="PhylomeDB" id="P9WNU7"/>
<dbReference type="BioCyc" id="MetaCyc:G185E-6303-MONOMER"/>
<dbReference type="BRENDA" id="6.3.1.19">
    <property type="organism ID" value="3445"/>
</dbReference>
<dbReference type="UniPathway" id="UPA00997"/>
<dbReference type="UniPathway" id="UPA00998"/>
<dbReference type="Proteomes" id="UP000001584">
    <property type="component" value="Chromosome"/>
</dbReference>
<dbReference type="GO" id="GO:0009274">
    <property type="term" value="C:peptidoglycan-based cell wall"/>
    <property type="evidence" value="ECO:0007005"/>
    <property type="project" value="MTBBASE"/>
</dbReference>
<dbReference type="GO" id="GO:0005886">
    <property type="term" value="C:plasma membrane"/>
    <property type="evidence" value="ECO:0007005"/>
    <property type="project" value="MTBBASE"/>
</dbReference>
<dbReference type="GO" id="GO:0016881">
    <property type="term" value="F:acid-amino acid ligase activity"/>
    <property type="evidence" value="ECO:0000314"/>
    <property type="project" value="MTBBASE"/>
</dbReference>
<dbReference type="GO" id="GO:0005524">
    <property type="term" value="F:ATP binding"/>
    <property type="evidence" value="ECO:0000314"/>
    <property type="project" value="UniProtKB"/>
</dbReference>
<dbReference type="GO" id="GO:0000287">
    <property type="term" value="F:magnesium ion binding"/>
    <property type="evidence" value="ECO:0007669"/>
    <property type="project" value="UniProtKB-UniRule"/>
</dbReference>
<dbReference type="GO" id="GO:0019787">
    <property type="term" value="F:ubiquitin-like protein transferase activity"/>
    <property type="evidence" value="ECO:0000314"/>
    <property type="project" value="UniProtKB"/>
</dbReference>
<dbReference type="GO" id="GO:0019941">
    <property type="term" value="P:modification-dependent protein catabolic process"/>
    <property type="evidence" value="ECO:0000315"/>
    <property type="project" value="UniProtKB"/>
</dbReference>
<dbReference type="GO" id="GO:0010498">
    <property type="term" value="P:proteasomal protein catabolic process"/>
    <property type="evidence" value="ECO:0000315"/>
    <property type="project" value="UniProtKB"/>
</dbReference>
<dbReference type="GO" id="GO:0070490">
    <property type="term" value="P:protein pupylation"/>
    <property type="evidence" value="ECO:0000314"/>
    <property type="project" value="UniProtKB"/>
</dbReference>
<dbReference type="GO" id="GO:0051409">
    <property type="term" value="P:response to nitrosative stress"/>
    <property type="evidence" value="ECO:0000315"/>
    <property type="project" value="MTBBASE"/>
</dbReference>
<dbReference type="GO" id="GO:0052164">
    <property type="term" value="P:symbiont defense to host-produced reactive oxygen species"/>
    <property type="evidence" value="ECO:0000315"/>
    <property type="project" value="UniProtKB"/>
</dbReference>
<dbReference type="HAMAP" id="MF_02111">
    <property type="entry name" value="Pup_ligase"/>
    <property type="match status" value="1"/>
</dbReference>
<dbReference type="InterPro" id="IPR022279">
    <property type="entry name" value="Pup_ligase"/>
</dbReference>
<dbReference type="InterPro" id="IPR004347">
    <property type="entry name" value="Pup_ligase/deamidase"/>
</dbReference>
<dbReference type="NCBIfam" id="TIGR03686">
    <property type="entry name" value="pupylate_PafA"/>
    <property type="match status" value="1"/>
</dbReference>
<dbReference type="PANTHER" id="PTHR42307">
    <property type="entry name" value="PUP DEAMIDASE/DEPUPYLASE"/>
    <property type="match status" value="1"/>
</dbReference>
<dbReference type="PANTHER" id="PTHR42307:SF3">
    <property type="entry name" value="PUP--PROTEIN LIGASE"/>
    <property type="match status" value="1"/>
</dbReference>
<dbReference type="Pfam" id="PF03136">
    <property type="entry name" value="Pup_ligase"/>
    <property type="match status" value="1"/>
</dbReference>
<dbReference type="PIRSF" id="PIRSF018077">
    <property type="entry name" value="UCP018077"/>
    <property type="match status" value="1"/>
</dbReference>
<organism>
    <name type="scientific">Mycobacterium tuberculosis (strain ATCC 25618 / H37Rv)</name>
    <dbReference type="NCBI Taxonomy" id="83332"/>
    <lineage>
        <taxon>Bacteria</taxon>
        <taxon>Bacillati</taxon>
        <taxon>Actinomycetota</taxon>
        <taxon>Actinomycetes</taxon>
        <taxon>Mycobacteriales</taxon>
        <taxon>Mycobacteriaceae</taxon>
        <taxon>Mycobacterium</taxon>
        <taxon>Mycobacterium tuberculosis complex</taxon>
    </lineage>
</organism>
<comment type="function">
    <text evidence="2 3 5 6">Catalyzes the covalent attachment of the prokaryotic ubiquitin-like protein modifier Pup to the proteasomal substrate proteins, thereby targeting them for proteasomal degradation. This tagging system is termed pupylation. The ligation reaction involves the side-chain carboxylate of the C-terminal glutamate of Pup and the side-chain amino group of a substrate lysine. PafA is required to confer resistance against the lethal effects of reactive nitrogen intermediates (RNI), antimicrobial molecules produced by activated macrophages and other cell types.</text>
</comment>
<comment type="catalytic activity">
    <reaction evidence="5 6">
        <text>ATP + [prokaryotic ubiquitin-like protein]-L-glutamate + [protein]-L-lysine = ADP + phosphate + N(6)-([prokaryotic ubiquitin-like protein]-gamma-L-glutamyl)-[protein]-L-lysine.</text>
        <dbReference type="EC" id="6.3.1.19"/>
    </reaction>
</comment>
<comment type="pathway">
    <text>Protein degradation; proteasomal Pup-dependent pathway.</text>
</comment>
<comment type="pathway">
    <text>Protein modification; protein pupylation.</text>
</comment>
<comment type="subunit">
    <text evidence="5">Interacts with the prokaryotic ubiquitin-like protein Pup.</text>
</comment>
<comment type="disruption phenotype">
    <text evidence="2 4">Cells lacking this gene have no detectable pupylated proteins and substrate proteins accumulate. These cells also become hypersensitive to reactive nitrogen intermediates (RNI) and fail to grow in both wild-type and nitric oxide synthase 2 deficient macrophages. Moreover, they display increased resistance to hydrogen peroxide.</text>
</comment>
<comment type="miscellaneous">
    <text>The reaction mechanism probably proceeds via the activation of Pup by phosphorylation of its C-terminal glutamate, which is then subject to nucleophilic attack by the substrate lysine, resulting in an isopeptide bond and the release of phosphate as a good leaving group.</text>
</comment>
<comment type="similarity">
    <text evidence="8">Belongs to the Pup ligase/Pup deamidase family. Pup-conjugating enzyme subfamily.</text>
</comment>
<name>PAFA_MYCTU</name>
<reference key="1">
    <citation type="journal article" date="2007" name="J. Bacteriol.">
        <title>Characterization of the proteasome accessory factor (paf) operon in Mycobacterium tuberculosis.</title>
        <authorList>
            <person name="Festa R.A."/>
            <person name="Pearce M.J."/>
            <person name="Darwin K.H."/>
        </authorList>
    </citation>
    <scope>NUCLEOTIDE SEQUENCE [GENOMIC DNA]</scope>
    <source>
        <strain>ATCC 25618 / H37Rv</strain>
    </source>
</reference>
<reference key="2">
    <citation type="journal article" date="1998" name="Nature">
        <title>Deciphering the biology of Mycobacterium tuberculosis from the complete genome sequence.</title>
        <authorList>
            <person name="Cole S.T."/>
            <person name="Brosch R."/>
            <person name="Parkhill J."/>
            <person name="Garnier T."/>
            <person name="Churcher C.M."/>
            <person name="Harris D.E."/>
            <person name="Gordon S.V."/>
            <person name="Eiglmeier K."/>
            <person name="Gas S."/>
            <person name="Barry C.E. III"/>
            <person name="Tekaia F."/>
            <person name="Badcock K."/>
            <person name="Basham D."/>
            <person name="Brown D."/>
            <person name="Chillingworth T."/>
            <person name="Connor R."/>
            <person name="Davies R.M."/>
            <person name="Devlin K."/>
            <person name="Feltwell T."/>
            <person name="Gentles S."/>
            <person name="Hamlin N."/>
            <person name="Holroyd S."/>
            <person name="Hornsby T."/>
            <person name="Jagels K."/>
            <person name="Krogh A."/>
            <person name="McLean J."/>
            <person name="Moule S."/>
            <person name="Murphy L.D."/>
            <person name="Oliver S."/>
            <person name="Osborne J."/>
            <person name="Quail M.A."/>
            <person name="Rajandream M.A."/>
            <person name="Rogers J."/>
            <person name="Rutter S."/>
            <person name="Seeger K."/>
            <person name="Skelton S."/>
            <person name="Squares S."/>
            <person name="Squares R."/>
            <person name="Sulston J.E."/>
            <person name="Taylor K."/>
            <person name="Whitehead S."/>
            <person name="Barrell B.G."/>
        </authorList>
    </citation>
    <scope>NUCLEOTIDE SEQUENCE [LARGE SCALE GENOMIC DNA]</scope>
    <source>
        <strain>ATCC 25618 / H37Rv</strain>
    </source>
</reference>
<reference key="3">
    <citation type="journal article" date="2003" name="Science">
        <title>The proteasome of Mycobacterium tuberculosis is required for resistance to nitric oxide.</title>
        <authorList>
            <person name="Darwin K.H."/>
            <person name="Ehrt S."/>
            <person name="Gutierrez-Ramos J.-C."/>
            <person name="Weich N."/>
            <person name="Nathan C.F."/>
        </authorList>
    </citation>
    <scope>ROLE IN RESISTANCE TO RNI</scope>
    <scope>DISRUPTION PHENOTYPE</scope>
    <source>
        <strain>ATCC 25618 / H37Rv</strain>
    </source>
</reference>
<reference key="4">
    <citation type="journal article" date="2006" name="EMBO J.">
        <title>Identification of substrates of the Mycobacterium tuberculosis proteasome.</title>
        <authorList>
            <person name="Pearce M.J."/>
            <person name="Arora P."/>
            <person name="Festa R.A."/>
            <person name="Butler-Wu S.M."/>
            <person name="Gokhale R.S."/>
            <person name="Darwin K.H."/>
        </authorList>
    </citation>
    <scope>FUNCTION IN THE PROTEASOME DEGRADATION PATHWAY</scope>
    <source>
        <strain>ATCC 25618 / H37Rv</strain>
    </source>
</reference>
<reference key="5">
    <citation type="journal article" date="2008" name="Science">
        <title>Ubiquitin-like protein involved in the proteasome pathway of Mycobacterium tuberculosis.</title>
        <authorList>
            <person name="Pearce M.J."/>
            <person name="Mintseris J."/>
            <person name="Ferreyra J."/>
            <person name="Gygi S.P."/>
            <person name="Darwin K.H."/>
        </authorList>
    </citation>
    <scope>DISRUPTION PHENOTYPE</scope>
    <source>
        <strain>ATCC 25618 / H37Rv</strain>
    </source>
</reference>
<reference key="6">
    <citation type="journal article" date="2009" name="Nat. Struct. Mol. Biol.">
        <title>Bacterial ubiquitin-like modifier Pup is deamidated and conjugated to substrates by distinct but homologous enzymes.</title>
        <authorList>
            <person name="Striebel F."/>
            <person name="Imkamp F."/>
            <person name="Sutter M."/>
            <person name="Steiner M."/>
            <person name="Mamedov A."/>
            <person name="Weber-Ban E."/>
        </authorList>
    </citation>
    <scope>FUNCTION</scope>
    <scope>CATALYTIC ACTIVITY</scope>
    <scope>INTERACTION WITH PUP</scope>
    <scope>REACTION MECHANISM</scope>
    <scope>IDENTIFICATION BY MASS SPECTROMETRY</scope>
    <source>
        <strain>ATCC 25618 / H37Rv</strain>
    </source>
</reference>
<reference key="7">
    <citation type="journal article" date="2010" name="J. Am. Chem. Soc.">
        <title>Prokaryotic ubiquitin-like protein (Pup) is coupled to substrates via the side chain of its C-terminal glutamate.</title>
        <authorList>
            <person name="Sutter M."/>
            <person name="Damberger F.F."/>
            <person name="Imkamp F."/>
            <person name="Allain F.H."/>
            <person name="Weber-Ban E."/>
        </authorList>
    </citation>
    <scope>FUNCTION</scope>
    <scope>CATALYTIC ACTIVITY</scope>
    <scope>LIGATION REACTION</scope>
    <source>
        <strain>ATCC 25618 / H37Rv</strain>
    </source>
</reference>
<reference key="8">
    <citation type="journal article" date="2010" name="Mol. Microbiol.">
        <title>Molecular analysis of the prokaryotic ubiquitin-like protein (Pup) conjugation pathway in Mycobacterium tuberculosis.</title>
        <authorList>
            <person name="Cerda-Maira F.A."/>
            <person name="Pearce M.J."/>
            <person name="Fuortes M."/>
            <person name="Bishai W.R."/>
            <person name="Hubbard S.R."/>
            <person name="Darwin K.H."/>
        </authorList>
    </citation>
    <scope>MUTAGENESIS OF GLU-9; GLU-11; ARG-53; TYR-55; ASP-57; GLU-63; HIS-123; ARG-171; ARG-187 AND HIS-207</scope>
</reference>
<reference key="9">
    <citation type="journal article" date="2011" name="Mol. Cell. Proteomics">
        <title>Proteogenomic analysis of Mycobacterium tuberculosis by high resolution mass spectrometry.</title>
        <authorList>
            <person name="Kelkar D.S."/>
            <person name="Kumar D."/>
            <person name="Kumar P."/>
            <person name="Balakrishnan L."/>
            <person name="Muthusamy B."/>
            <person name="Yadav A.K."/>
            <person name="Shrivastava P."/>
            <person name="Marimuthu A."/>
            <person name="Anand S."/>
            <person name="Sundaram H."/>
            <person name="Kingsbury R."/>
            <person name="Harsha H.C."/>
            <person name="Nair B."/>
            <person name="Prasad T.S."/>
            <person name="Chauhan D.S."/>
            <person name="Katoch K."/>
            <person name="Katoch V.M."/>
            <person name="Kumar P."/>
            <person name="Chaerkady R."/>
            <person name="Ramachandran S."/>
            <person name="Dash D."/>
            <person name="Pandey A."/>
        </authorList>
    </citation>
    <scope>IDENTIFICATION BY MASS SPECTROMETRY [LARGE SCALE ANALYSIS]</scope>
    <source>
        <strain>ATCC 25618 / H37Rv</strain>
    </source>
</reference>
<protein>
    <recommendedName>
        <fullName>Pup--protein ligase</fullName>
        <ecNumber evidence="5 6">6.3.1.19</ecNumber>
    </recommendedName>
    <alternativeName>
        <fullName>Proteasome accessory factor A</fullName>
    </alternativeName>
    <alternativeName>
        <fullName>Pup-conjugating enzyme</fullName>
    </alternativeName>
</protein>